<reference key="1">
    <citation type="journal article" date="2004" name="Proc. Natl. Acad. Sci. U.S.A.">
        <title>Complete genomes of two clinical Staphylococcus aureus strains: evidence for the rapid evolution of virulence and drug resistance.</title>
        <authorList>
            <person name="Holden M.T.G."/>
            <person name="Feil E.J."/>
            <person name="Lindsay J.A."/>
            <person name="Peacock S.J."/>
            <person name="Day N.P.J."/>
            <person name="Enright M.C."/>
            <person name="Foster T.J."/>
            <person name="Moore C.E."/>
            <person name="Hurst L."/>
            <person name="Atkin R."/>
            <person name="Barron A."/>
            <person name="Bason N."/>
            <person name="Bentley S.D."/>
            <person name="Chillingworth C."/>
            <person name="Chillingworth T."/>
            <person name="Churcher C."/>
            <person name="Clark L."/>
            <person name="Corton C."/>
            <person name="Cronin A."/>
            <person name="Doggett J."/>
            <person name="Dowd L."/>
            <person name="Feltwell T."/>
            <person name="Hance Z."/>
            <person name="Harris B."/>
            <person name="Hauser H."/>
            <person name="Holroyd S."/>
            <person name="Jagels K."/>
            <person name="James K.D."/>
            <person name="Lennard N."/>
            <person name="Line A."/>
            <person name="Mayes R."/>
            <person name="Moule S."/>
            <person name="Mungall K."/>
            <person name="Ormond D."/>
            <person name="Quail M.A."/>
            <person name="Rabbinowitsch E."/>
            <person name="Rutherford K.M."/>
            <person name="Sanders M."/>
            <person name="Sharp S."/>
            <person name="Simmonds M."/>
            <person name="Stevens K."/>
            <person name="Whitehead S."/>
            <person name="Barrell B.G."/>
            <person name="Spratt B.G."/>
            <person name="Parkhill J."/>
        </authorList>
    </citation>
    <scope>NUCLEOTIDE SEQUENCE [LARGE SCALE GENOMIC DNA]</scope>
    <source>
        <strain>MRSA252</strain>
    </source>
</reference>
<organism>
    <name type="scientific">Staphylococcus aureus (strain MRSA252)</name>
    <dbReference type="NCBI Taxonomy" id="282458"/>
    <lineage>
        <taxon>Bacteria</taxon>
        <taxon>Bacillati</taxon>
        <taxon>Bacillota</taxon>
        <taxon>Bacilli</taxon>
        <taxon>Bacillales</taxon>
        <taxon>Staphylococcaceae</taxon>
        <taxon>Staphylococcus</taxon>
    </lineage>
</organism>
<dbReference type="EC" id="6.1.1.10" evidence="1"/>
<dbReference type="EMBL" id="BX571856">
    <property type="protein sequence ID" value="CAG39513.1"/>
    <property type="molecule type" value="Genomic_DNA"/>
</dbReference>
<dbReference type="RefSeq" id="WP_001051120.1">
    <property type="nucleotide sequence ID" value="NC_002952.2"/>
</dbReference>
<dbReference type="SMR" id="Q6GJI1"/>
<dbReference type="DrugBank" id="DB05224">
    <property type="generic name" value="REP8839"/>
</dbReference>
<dbReference type="KEGG" id="sar:SAR0491"/>
<dbReference type="HOGENOM" id="CLU_009710_9_4_9"/>
<dbReference type="Proteomes" id="UP000000596">
    <property type="component" value="Chromosome"/>
</dbReference>
<dbReference type="GO" id="GO:0005737">
    <property type="term" value="C:cytoplasm"/>
    <property type="evidence" value="ECO:0007669"/>
    <property type="project" value="UniProtKB-SubCell"/>
</dbReference>
<dbReference type="GO" id="GO:0005524">
    <property type="term" value="F:ATP binding"/>
    <property type="evidence" value="ECO:0007669"/>
    <property type="project" value="UniProtKB-UniRule"/>
</dbReference>
<dbReference type="GO" id="GO:0004825">
    <property type="term" value="F:methionine-tRNA ligase activity"/>
    <property type="evidence" value="ECO:0007669"/>
    <property type="project" value="UniProtKB-UniRule"/>
</dbReference>
<dbReference type="GO" id="GO:0000049">
    <property type="term" value="F:tRNA binding"/>
    <property type="evidence" value="ECO:0007669"/>
    <property type="project" value="UniProtKB-KW"/>
</dbReference>
<dbReference type="GO" id="GO:0006431">
    <property type="term" value="P:methionyl-tRNA aminoacylation"/>
    <property type="evidence" value="ECO:0007669"/>
    <property type="project" value="UniProtKB-UniRule"/>
</dbReference>
<dbReference type="CDD" id="cd07957">
    <property type="entry name" value="Anticodon_Ia_Met"/>
    <property type="match status" value="1"/>
</dbReference>
<dbReference type="CDD" id="cd00814">
    <property type="entry name" value="MetRS_core"/>
    <property type="match status" value="1"/>
</dbReference>
<dbReference type="CDD" id="cd02800">
    <property type="entry name" value="tRNA_bind_EcMetRS_like"/>
    <property type="match status" value="1"/>
</dbReference>
<dbReference type="FunFam" id="1.10.730.10:FF:000026">
    <property type="entry name" value="Methionine--tRNA ligase"/>
    <property type="match status" value="1"/>
</dbReference>
<dbReference type="FunFam" id="2.170.220.10:FF:000002">
    <property type="entry name" value="Methionine--tRNA ligase"/>
    <property type="match status" value="1"/>
</dbReference>
<dbReference type="FunFam" id="2.40.50.140:FF:000042">
    <property type="entry name" value="Methionine--tRNA ligase"/>
    <property type="match status" value="1"/>
</dbReference>
<dbReference type="Gene3D" id="2.170.220.10">
    <property type="match status" value="1"/>
</dbReference>
<dbReference type="Gene3D" id="3.40.50.620">
    <property type="entry name" value="HUPs"/>
    <property type="match status" value="1"/>
</dbReference>
<dbReference type="Gene3D" id="1.10.730.10">
    <property type="entry name" value="Isoleucyl-tRNA Synthetase, Domain 1"/>
    <property type="match status" value="1"/>
</dbReference>
<dbReference type="Gene3D" id="2.40.50.140">
    <property type="entry name" value="Nucleic acid-binding proteins"/>
    <property type="match status" value="1"/>
</dbReference>
<dbReference type="HAMAP" id="MF_01228">
    <property type="entry name" value="Met_tRNA_synth_type2"/>
    <property type="match status" value="1"/>
</dbReference>
<dbReference type="InterPro" id="IPR001412">
    <property type="entry name" value="aa-tRNA-synth_I_CS"/>
</dbReference>
<dbReference type="InterPro" id="IPR041872">
    <property type="entry name" value="Anticodon_Met"/>
</dbReference>
<dbReference type="InterPro" id="IPR013155">
    <property type="entry name" value="M/V/L/I-tRNA-synth_anticd-bd"/>
</dbReference>
<dbReference type="InterPro" id="IPR004495">
    <property type="entry name" value="Met-tRNA-synth_bsu_C"/>
</dbReference>
<dbReference type="InterPro" id="IPR014758">
    <property type="entry name" value="Met-tRNA_synth"/>
</dbReference>
<dbReference type="InterPro" id="IPR023457">
    <property type="entry name" value="Met-tRNA_synth_2"/>
</dbReference>
<dbReference type="InterPro" id="IPR015413">
    <property type="entry name" value="Methionyl/Leucyl_tRNA_Synth"/>
</dbReference>
<dbReference type="InterPro" id="IPR033911">
    <property type="entry name" value="MetRS_core"/>
</dbReference>
<dbReference type="InterPro" id="IPR012340">
    <property type="entry name" value="NA-bd_OB-fold"/>
</dbReference>
<dbReference type="InterPro" id="IPR014729">
    <property type="entry name" value="Rossmann-like_a/b/a_fold"/>
</dbReference>
<dbReference type="InterPro" id="IPR002547">
    <property type="entry name" value="tRNA-bd_dom"/>
</dbReference>
<dbReference type="InterPro" id="IPR009080">
    <property type="entry name" value="tRNAsynth_Ia_anticodon-bd"/>
</dbReference>
<dbReference type="NCBIfam" id="TIGR00398">
    <property type="entry name" value="metG"/>
    <property type="match status" value="1"/>
</dbReference>
<dbReference type="NCBIfam" id="TIGR00399">
    <property type="entry name" value="metG_C_term"/>
    <property type="match status" value="1"/>
</dbReference>
<dbReference type="NCBIfam" id="NF008900">
    <property type="entry name" value="PRK12267.1"/>
    <property type="match status" value="1"/>
</dbReference>
<dbReference type="PANTHER" id="PTHR43326:SF1">
    <property type="entry name" value="METHIONINE--TRNA LIGASE, MITOCHONDRIAL"/>
    <property type="match status" value="1"/>
</dbReference>
<dbReference type="PANTHER" id="PTHR43326">
    <property type="entry name" value="METHIONYL-TRNA SYNTHETASE"/>
    <property type="match status" value="1"/>
</dbReference>
<dbReference type="Pfam" id="PF08264">
    <property type="entry name" value="Anticodon_1"/>
    <property type="match status" value="1"/>
</dbReference>
<dbReference type="Pfam" id="PF09334">
    <property type="entry name" value="tRNA-synt_1g"/>
    <property type="match status" value="1"/>
</dbReference>
<dbReference type="Pfam" id="PF01588">
    <property type="entry name" value="tRNA_bind"/>
    <property type="match status" value="1"/>
</dbReference>
<dbReference type="PRINTS" id="PR01041">
    <property type="entry name" value="TRNASYNTHMET"/>
</dbReference>
<dbReference type="SUPFAM" id="SSF47323">
    <property type="entry name" value="Anticodon-binding domain of a subclass of class I aminoacyl-tRNA synthetases"/>
    <property type="match status" value="1"/>
</dbReference>
<dbReference type="SUPFAM" id="SSF50249">
    <property type="entry name" value="Nucleic acid-binding proteins"/>
    <property type="match status" value="1"/>
</dbReference>
<dbReference type="SUPFAM" id="SSF52374">
    <property type="entry name" value="Nucleotidylyl transferase"/>
    <property type="match status" value="1"/>
</dbReference>
<dbReference type="PROSITE" id="PS00178">
    <property type="entry name" value="AA_TRNA_LIGASE_I"/>
    <property type="match status" value="1"/>
</dbReference>
<dbReference type="PROSITE" id="PS50886">
    <property type="entry name" value="TRBD"/>
    <property type="match status" value="1"/>
</dbReference>
<sequence length="657" mass="74898">MAKETFYITTPIYYPSGNLHIGHAYSTVAGDVIARYKRMQGYDVRYLTGTDEHGQKIQEKAQKAGKTEIEYLDEMIAGIKQLWAKLEISNDDFIRTTEERHKHVVEQVFERLLKQGDIYLGEYEGWYSVPDETYYTESQLVDPQYENGKIIGGKSPDSGHEVELVKEESYFFNISKYTDRLLEFYDQNPDFIQPPSRKNEMINNFIKPGLADLAVSRTSFNWGVHVPSNPKHVVYVWIDALVNYISALGYLSDDESLFNKYWPADIHLMAKEIVRFHSIIWPILLMALDLPLPKKVFAHGWILMKDGKMSKSKGNVVDPNILIDRYGLDATRYYLMRELPFGSDGVFTPEAFVERTNFDLANDLGNLVNRTISMINKYFDGELPAYQGPLHELDEEMEAMALETVKSYTESMESLQFSVALSTVWKFISRTNKYIDETTPWVLAKDDSQKDMLGNVMAHLVENIRYAAVLLRPFLTHAPKEIFEQLNINNPQFMEFSSLEQYGVLTEPIMVTGQPKPIFPRLDSEAEIAYIKESMQPPATEEEKEEIPSKPQIDIKDFDKVEIKAATIIDAEHVKKSDKLLKIQVDLDSEQRQIVSGIAKFYTPDDIIGKKVAVVTNLKPAKLMGQKSEGMILSAEKDGVLTLVSLPSAIPNGAVIK</sequence>
<proteinExistence type="inferred from homology"/>
<evidence type="ECO:0000255" key="1">
    <source>
        <dbReference type="HAMAP-Rule" id="MF_01228"/>
    </source>
</evidence>
<feature type="chain" id="PRO_0000139242" description="Methionine--tRNA ligase">
    <location>
        <begin position="1"/>
        <end position="657"/>
    </location>
</feature>
<feature type="domain" description="tRNA-binding" evidence="1">
    <location>
        <begin position="557"/>
        <end position="657"/>
    </location>
</feature>
<feature type="short sequence motif" description="'HIGH' region">
    <location>
        <begin position="13"/>
        <end position="23"/>
    </location>
</feature>
<feature type="short sequence motif" description="'KMSKS' region">
    <location>
        <begin position="308"/>
        <end position="312"/>
    </location>
</feature>
<feature type="binding site" evidence="1">
    <location>
        <position position="311"/>
    </location>
    <ligand>
        <name>ATP</name>
        <dbReference type="ChEBI" id="CHEBI:30616"/>
    </ligand>
</feature>
<protein>
    <recommendedName>
        <fullName evidence="1">Methionine--tRNA ligase</fullName>
        <ecNumber evidence="1">6.1.1.10</ecNumber>
    </recommendedName>
    <alternativeName>
        <fullName evidence="1">Methionyl-tRNA synthetase</fullName>
        <shortName evidence="1">MetRS</shortName>
    </alternativeName>
</protein>
<gene>
    <name evidence="1" type="primary">metG</name>
    <name type="synonym">metS</name>
    <name type="ordered locus">SAR0491</name>
</gene>
<accession>Q6GJI1</accession>
<name>SYM_STAAR</name>
<comment type="function">
    <text evidence="1">Is required not only for elongation of protein synthesis but also for the initiation of all mRNA translation through initiator tRNA(fMet) aminoacylation.</text>
</comment>
<comment type="catalytic activity">
    <reaction evidence="1">
        <text>tRNA(Met) + L-methionine + ATP = L-methionyl-tRNA(Met) + AMP + diphosphate</text>
        <dbReference type="Rhea" id="RHEA:13481"/>
        <dbReference type="Rhea" id="RHEA-COMP:9667"/>
        <dbReference type="Rhea" id="RHEA-COMP:9698"/>
        <dbReference type="ChEBI" id="CHEBI:30616"/>
        <dbReference type="ChEBI" id="CHEBI:33019"/>
        <dbReference type="ChEBI" id="CHEBI:57844"/>
        <dbReference type="ChEBI" id="CHEBI:78442"/>
        <dbReference type="ChEBI" id="CHEBI:78530"/>
        <dbReference type="ChEBI" id="CHEBI:456215"/>
        <dbReference type="EC" id="6.1.1.10"/>
    </reaction>
</comment>
<comment type="subunit">
    <text evidence="1">Homodimer.</text>
</comment>
<comment type="subcellular location">
    <subcellularLocation>
        <location evidence="1">Cytoplasm</location>
    </subcellularLocation>
</comment>
<comment type="similarity">
    <text evidence="1">Belongs to the class-I aminoacyl-tRNA synthetase family. MetG type 2B subfamily.</text>
</comment>
<keyword id="KW-0030">Aminoacyl-tRNA synthetase</keyword>
<keyword id="KW-0067">ATP-binding</keyword>
<keyword id="KW-0963">Cytoplasm</keyword>
<keyword id="KW-0436">Ligase</keyword>
<keyword id="KW-0547">Nucleotide-binding</keyword>
<keyword id="KW-0648">Protein biosynthesis</keyword>
<keyword id="KW-0694">RNA-binding</keyword>
<keyword id="KW-0820">tRNA-binding</keyword>